<dbReference type="EMBL" id="U86031">
    <property type="protein sequence ID" value="AAB47508.1"/>
    <property type="molecule type" value="Genomic_DNA"/>
</dbReference>
<dbReference type="EMBL" id="AY005933">
    <property type="protein sequence ID" value="AAF99344.1"/>
    <property type="molecule type" value="Genomic_DNA"/>
</dbReference>
<dbReference type="EMBL" id="AY005934">
    <property type="protein sequence ID" value="AAF99345.1"/>
    <property type="molecule type" value="Genomic_DNA"/>
</dbReference>
<dbReference type="EMBL" id="AY005935">
    <property type="protein sequence ID" value="AAF99346.1"/>
    <property type="molecule type" value="Genomic_DNA"/>
</dbReference>
<dbReference type="EMBL" id="AY005936">
    <property type="protein sequence ID" value="AAF99347.1"/>
    <property type="molecule type" value="Genomic_DNA"/>
</dbReference>
<dbReference type="EMBL" id="AY005937">
    <property type="protein sequence ID" value="AAF99348.1"/>
    <property type="molecule type" value="Genomic_DNA"/>
</dbReference>
<dbReference type="EMBL" id="AY005938">
    <property type="protein sequence ID" value="AAF99349.2"/>
    <property type="molecule type" value="Genomic_DNA"/>
</dbReference>
<dbReference type="EMBL" id="AY005939">
    <property type="protein sequence ID" value="AAF99350.1"/>
    <property type="molecule type" value="Genomic_DNA"/>
</dbReference>
<dbReference type="EMBL" id="AY005940">
    <property type="protein sequence ID" value="AAF99351.1"/>
    <property type="molecule type" value="Genomic_DNA"/>
</dbReference>
<dbReference type="EMBL" id="AY005945">
    <property type="protein sequence ID" value="AAF99356.1"/>
    <property type="molecule type" value="Genomic_DNA"/>
</dbReference>
<dbReference type="EMBL" id="AY005946">
    <property type="protein sequence ID" value="AAF99357.1"/>
    <property type="molecule type" value="Genomic_DNA"/>
</dbReference>
<dbReference type="EMBL" id="AY005948">
    <property type="protein sequence ID" value="AAF99359.1"/>
    <property type="molecule type" value="Genomic_DNA"/>
</dbReference>
<dbReference type="EMBL" id="AY005949">
    <property type="protein sequence ID" value="AAF99360.1"/>
    <property type="molecule type" value="Genomic_DNA"/>
</dbReference>
<dbReference type="EMBL" id="AY005950">
    <property type="protein sequence ID" value="AAF99361.1"/>
    <property type="molecule type" value="Genomic_DNA"/>
</dbReference>
<dbReference type="EMBL" id="AY005951">
    <property type="protein sequence ID" value="AAF99362.1"/>
    <property type="molecule type" value="Genomic_DNA"/>
</dbReference>
<dbReference type="EMBL" id="AY005952">
    <property type="protein sequence ID" value="AAF99363.2"/>
    <property type="molecule type" value="Genomic_DNA"/>
</dbReference>
<dbReference type="EMBL" id="AY005953">
    <property type="protein sequence ID" value="AAF99364.2"/>
    <property type="molecule type" value="Genomic_DNA"/>
</dbReference>
<dbReference type="EMBL" id="AY005961">
    <property type="protein sequence ID" value="AAF99372.1"/>
    <property type="molecule type" value="Genomic_DNA"/>
</dbReference>
<dbReference type="EMBL" id="AY005962">
    <property type="protein sequence ID" value="AAF99373.1"/>
    <property type="molecule type" value="Genomic_DNA"/>
</dbReference>
<dbReference type="EMBL" id="AY005965">
    <property type="protein sequence ID" value="AAF99376.2"/>
    <property type="molecule type" value="Genomic_DNA"/>
</dbReference>
<dbReference type="EMBL" id="AY005967">
    <property type="protein sequence ID" value="AAF99378.1"/>
    <property type="molecule type" value="Genomic_DNA"/>
</dbReference>
<dbReference type="EMBL" id="AY005969">
    <property type="protein sequence ID" value="AAF99380.2"/>
    <property type="molecule type" value="Genomic_DNA"/>
</dbReference>
<dbReference type="EMBL" id="AY005972">
    <property type="protein sequence ID" value="AAF99383.1"/>
    <property type="molecule type" value="Genomic_DNA"/>
</dbReference>
<dbReference type="EMBL" id="AY005973">
    <property type="protein sequence ID" value="AAF99384.2"/>
    <property type="molecule type" value="Genomic_DNA"/>
</dbReference>
<dbReference type="SMR" id="P92600"/>
<dbReference type="GO" id="GO:0005743">
    <property type="term" value="C:mitochondrial inner membrane"/>
    <property type="evidence" value="ECO:0007669"/>
    <property type="project" value="UniProtKB-SubCell"/>
</dbReference>
<dbReference type="GO" id="GO:0046872">
    <property type="term" value="F:metal ion binding"/>
    <property type="evidence" value="ECO:0007669"/>
    <property type="project" value="UniProtKB-KW"/>
</dbReference>
<dbReference type="GO" id="GO:0008121">
    <property type="term" value="F:ubiquinol-cytochrome-c reductase activity"/>
    <property type="evidence" value="ECO:0007669"/>
    <property type="project" value="TreeGrafter"/>
</dbReference>
<dbReference type="GO" id="GO:0006122">
    <property type="term" value="P:mitochondrial electron transport, ubiquinol to cytochrome c"/>
    <property type="evidence" value="ECO:0007669"/>
    <property type="project" value="TreeGrafter"/>
</dbReference>
<dbReference type="CDD" id="cd00290">
    <property type="entry name" value="cytochrome_b_C"/>
    <property type="match status" value="1"/>
</dbReference>
<dbReference type="CDD" id="cd00284">
    <property type="entry name" value="Cytochrome_b_N"/>
    <property type="match status" value="1"/>
</dbReference>
<dbReference type="FunFam" id="1.20.810.10:FF:000002">
    <property type="entry name" value="Cytochrome b"/>
    <property type="match status" value="1"/>
</dbReference>
<dbReference type="Gene3D" id="1.20.810.10">
    <property type="entry name" value="Cytochrome Bc1 Complex, Chain C"/>
    <property type="match status" value="1"/>
</dbReference>
<dbReference type="InterPro" id="IPR005798">
    <property type="entry name" value="Cyt_b/b6_C"/>
</dbReference>
<dbReference type="InterPro" id="IPR036150">
    <property type="entry name" value="Cyt_b/b6_C_sf"/>
</dbReference>
<dbReference type="InterPro" id="IPR005797">
    <property type="entry name" value="Cyt_b/b6_N"/>
</dbReference>
<dbReference type="InterPro" id="IPR027387">
    <property type="entry name" value="Cytb/b6-like_sf"/>
</dbReference>
<dbReference type="InterPro" id="IPR048260">
    <property type="entry name" value="Cytochrome_b_C_euk/bac"/>
</dbReference>
<dbReference type="InterPro" id="IPR048259">
    <property type="entry name" value="Cytochrome_b_N_euk/bac"/>
</dbReference>
<dbReference type="InterPro" id="IPR016174">
    <property type="entry name" value="Di-haem_cyt_TM"/>
</dbReference>
<dbReference type="PANTHER" id="PTHR19271">
    <property type="entry name" value="CYTOCHROME B"/>
    <property type="match status" value="1"/>
</dbReference>
<dbReference type="PANTHER" id="PTHR19271:SF16">
    <property type="entry name" value="CYTOCHROME B"/>
    <property type="match status" value="1"/>
</dbReference>
<dbReference type="Pfam" id="PF00032">
    <property type="entry name" value="Cytochrom_B_C"/>
    <property type="match status" value="1"/>
</dbReference>
<dbReference type="Pfam" id="PF00033">
    <property type="entry name" value="Cytochrome_B"/>
    <property type="match status" value="1"/>
</dbReference>
<dbReference type="SUPFAM" id="SSF81648">
    <property type="entry name" value="a domain/subunit of cytochrome bc1 complex (Ubiquinol-cytochrome c reductase)"/>
    <property type="match status" value="1"/>
</dbReference>
<dbReference type="SUPFAM" id="SSF81342">
    <property type="entry name" value="Transmembrane di-heme cytochromes"/>
    <property type="match status" value="1"/>
</dbReference>
<dbReference type="PROSITE" id="PS51003">
    <property type="entry name" value="CYTB_CTER"/>
    <property type="match status" value="1"/>
</dbReference>
<dbReference type="PROSITE" id="PS51002">
    <property type="entry name" value="CYTB_NTER"/>
    <property type="match status" value="1"/>
</dbReference>
<comment type="function">
    <text evidence="2">Component of the ubiquinol-cytochrome c reductase complex (complex III or cytochrome b-c1 complex) that is part of the mitochondrial respiratory chain. The b-c1 complex mediates electron transfer from ubiquinol to cytochrome c. Contributes to the generation of a proton gradient across the mitochondrial membrane that is then used for ATP synthesis.</text>
</comment>
<comment type="cofactor">
    <cofactor evidence="2">
        <name>heme b</name>
        <dbReference type="ChEBI" id="CHEBI:60344"/>
    </cofactor>
    <text evidence="2">Binds 2 heme b groups non-covalently.</text>
</comment>
<comment type="subunit">
    <text evidence="2">The cytochrome bc1 complex contains 11 subunits: 3 respiratory subunits (MT-CYB, CYC1 and UQCRFS1), 2 core proteins (UQCRC1 and UQCRC2) and 6 low-molecular weight proteins (UQCRH/QCR6, UQCRB/QCR7, UQCRQ/QCR8, UQCR10/QCR9, UQCR11/QCR10 and a cleavage product of UQCRFS1). This cytochrome bc1 complex then forms a dimer.</text>
</comment>
<comment type="subcellular location">
    <subcellularLocation>
        <location evidence="2">Mitochondrion inner membrane</location>
        <topology evidence="2">Multi-pass membrane protein</topology>
    </subcellularLocation>
</comment>
<comment type="miscellaneous">
    <text evidence="1">Heme 1 (or BL or b562) is low-potential and absorbs at about 562 nm, and heme 2 (or BH or b566) is high-potential and absorbs at about 566 nm.</text>
</comment>
<comment type="similarity">
    <text evidence="3 4">Belongs to the cytochrome b family.</text>
</comment>
<comment type="caution">
    <text evidence="2">The full-length protein contains only eight transmembrane helices, not nine as predicted by bioinformatics tools.</text>
</comment>
<proteinExistence type="inferred from homology"/>
<keyword id="KW-0249">Electron transport</keyword>
<keyword id="KW-0349">Heme</keyword>
<keyword id="KW-0408">Iron</keyword>
<keyword id="KW-0472">Membrane</keyword>
<keyword id="KW-0479">Metal-binding</keyword>
<keyword id="KW-0496">Mitochondrion</keyword>
<keyword id="KW-0999">Mitochondrion inner membrane</keyword>
<keyword id="KW-0679">Respiratory chain</keyword>
<keyword id="KW-0812">Transmembrane</keyword>
<keyword id="KW-1133">Transmembrane helix</keyword>
<keyword id="KW-0813">Transport</keyword>
<keyword id="KW-0830">Ubiquinone</keyword>
<name>CYB_CORCX</name>
<accession>P92600</accession>
<accession>Q9B7H8</accession>
<accession>Q9B7H9</accession>
<accession>Q9B7I0</accession>
<accession>Q9B7I1</accession>
<accession>Q9B7I2</accession>
<accession>Q9B7I3</accession>
<accession>Q9G242</accession>
<accession>Q9G243</accession>
<accession>Q9G245</accession>
<accession>Q9G3J1</accession>
<accession>Q9G3J2</accession>
<accession>Q9G3J3</accession>
<accession>Q9G3J5</accession>
<organism>
    <name type="scientific">Corvus corax</name>
    <name type="common">Common raven</name>
    <dbReference type="NCBI Taxonomy" id="56781"/>
    <lineage>
        <taxon>Eukaryota</taxon>
        <taxon>Metazoa</taxon>
        <taxon>Chordata</taxon>
        <taxon>Craniata</taxon>
        <taxon>Vertebrata</taxon>
        <taxon>Euteleostomi</taxon>
        <taxon>Archelosauria</taxon>
        <taxon>Archosauria</taxon>
        <taxon>Dinosauria</taxon>
        <taxon>Saurischia</taxon>
        <taxon>Theropoda</taxon>
        <taxon>Coelurosauria</taxon>
        <taxon>Aves</taxon>
        <taxon>Neognathae</taxon>
        <taxon>Neoaves</taxon>
        <taxon>Telluraves</taxon>
        <taxon>Australaves</taxon>
        <taxon>Passeriformes</taxon>
        <taxon>Corvoidea</taxon>
        <taxon>Corvidae</taxon>
        <taxon>Corvus</taxon>
    </lineage>
</organism>
<evidence type="ECO:0000250" key="1"/>
<evidence type="ECO:0000250" key="2">
    <source>
        <dbReference type="UniProtKB" id="P00157"/>
    </source>
</evidence>
<evidence type="ECO:0000255" key="3">
    <source>
        <dbReference type="PROSITE-ProRule" id="PRU00967"/>
    </source>
</evidence>
<evidence type="ECO:0000255" key="4">
    <source>
        <dbReference type="PROSITE-ProRule" id="PRU00968"/>
    </source>
</evidence>
<feature type="chain" id="PRO_0000060810" description="Cytochrome b">
    <location>
        <begin position="1" status="less than"/>
        <end position="308" status="greater than"/>
    </location>
</feature>
<feature type="transmembrane region" description="Helical" evidence="2">
    <location>
        <begin position="1"/>
        <end position="21"/>
    </location>
</feature>
<feature type="transmembrane region" description="Helical" evidence="2">
    <location>
        <begin position="45"/>
        <end position="66"/>
    </location>
</feature>
<feature type="transmembrane region" description="Helical" evidence="2">
    <location>
        <begin position="81"/>
        <end position="101"/>
    </location>
</feature>
<feature type="transmembrane region" description="Helical" evidence="2">
    <location>
        <begin position="146"/>
        <end position="166"/>
    </location>
</feature>
<feature type="transmembrane region" description="Helical" evidence="2">
    <location>
        <begin position="194"/>
        <end position="214"/>
    </location>
</feature>
<feature type="transmembrane region" description="Helical" evidence="2">
    <location>
        <begin position="256"/>
        <end position="276"/>
    </location>
</feature>
<feature type="transmembrane region" description="Helical" evidence="2">
    <location>
        <begin position="288"/>
        <end position="308"/>
    </location>
</feature>
<feature type="binding site" description="axial binding residue" evidence="2">
    <location>
        <position position="51"/>
    </location>
    <ligand>
        <name>heme b</name>
        <dbReference type="ChEBI" id="CHEBI:60344"/>
        <label>b562</label>
    </ligand>
    <ligandPart>
        <name>Fe</name>
        <dbReference type="ChEBI" id="CHEBI:18248"/>
    </ligandPart>
</feature>
<feature type="binding site" description="axial binding residue" evidence="2">
    <location>
        <position position="65"/>
    </location>
    <ligand>
        <name>heme b</name>
        <dbReference type="ChEBI" id="CHEBI:60344"/>
        <label>b566</label>
    </ligand>
    <ligandPart>
        <name>Fe</name>
        <dbReference type="ChEBI" id="CHEBI:18248"/>
    </ligandPart>
</feature>
<feature type="binding site" description="axial binding residue" evidence="2">
    <location>
        <position position="150"/>
    </location>
    <ligand>
        <name>heme b</name>
        <dbReference type="ChEBI" id="CHEBI:60344"/>
        <label>b562</label>
    </ligand>
    <ligandPart>
        <name>Fe</name>
        <dbReference type="ChEBI" id="CHEBI:18248"/>
    </ligandPart>
</feature>
<feature type="binding site" description="axial binding residue" evidence="2">
    <location>
        <position position="164"/>
    </location>
    <ligand>
        <name>heme b</name>
        <dbReference type="ChEBI" id="CHEBI:60344"/>
        <label>b566</label>
    </ligand>
    <ligandPart>
        <name>Fe</name>
        <dbReference type="ChEBI" id="CHEBI:18248"/>
    </ligandPart>
</feature>
<feature type="binding site" evidence="2">
    <location>
        <position position="169"/>
    </location>
    <ligand>
        <name>a ubiquinone</name>
        <dbReference type="ChEBI" id="CHEBI:16389"/>
    </ligand>
</feature>
<feature type="sequence variant" description="In strain: Isolate California-168, Isolate California-169, Isolate California-170, Isolate California-171, Isolate California-175, Isolate California-176, Isolate Idaho-1, Isolate Idaho-2, Isolate Idaho-7, Isolate Idaho-8, Isolate Idaho-10, Isolate Idaho-11, Isolate Idaho-12, Isolate Washington-899 and Isolate Washington-SOA.">
    <original>T</original>
    <variation>A</variation>
    <location>
        <position position="32"/>
    </location>
</feature>
<feature type="sequence variant" description="In strain: Isolate California-168, Isolate California-169, Isolate California-170, Isolate California-171, Isolate California-175, Isolate California-176, Isolate Idaho-1, Isolate Idaho-2, Isolate Idaho-7, Isolate Idaho-8, Isolate Idaho-10, Isolate Idaho-11, Isolate Idaho-12, Isolate Washington-899 and Isolate Washington-SOA.">
    <original>N</original>
    <variation>D</variation>
    <location>
        <position position="40"/>
    </location>
</feature>
<feature type="sequence variant" description="In strain: Isolate New Mexico-523.">
    <original>I</original>
    <variation>F</variation>
    <location>
        <position position="70"/>
    </location>
</feature>
<feature type="sequence variant" description="In strain: Isolate Washington-SOA.">
    <original>V</original>
    <variation>L</variation>
    <location>
        <position position="97"/>
    </location>
</feature>
<feature type="sequence variant" description="In strain: Isolate New Mexico-522.">
    <original>V</original>
    <variation>F</variation>
    <location>
        <position position="100"/>
    </location>
</feature>
<feature type="non-terminal residue">
    <location>
        <position position="1"/>
    </location>
</feature>
<feature type="non-terminal residue">
    <location>
        <position position="308"/>
    </location>
</feature>
<geneLocation type="mitochondrion"/>
<protein>
    <recommendedName>
        <fullName>Cytochrome b</fullName>
    </recommendedName>
    <alternativeName>
        <fullName>Complex III subunit 3</fullName>
    </alternativeName>
    <alternativeName>
        <fullName>Complex III subunit III</fullName>
    </alternativeName>
    <alternativeName>
        <fullName>Cytochrome b-c1 complex subunit 3</fullName>
    </alternativeName>
    <alternativeName>
        <fullName>Ubiquinol-cytochrome-c reductase complex cytochrome b subunit</fullName>
    </alternativeName>
</protein>
<gene>
    <name type="primary">MT-CYB</name>
    <name type="synonym">COB</name>
    <name type="synonym">CYTB</name>
    <name type="synonym">MTCYB</name>
</gene>
<sequence>FGSLLGLCLITQIITGLLLAMHYTADTSLAFTSVAHMCRNVQFGWLIRNLHANGASFFFICIYLHIGRGIYYGSYLNKETWNIGVILLLTLMATAFVGYVLPWGQMSFWGATVITNLFSAIPYIGQTLVEWLWGGFSVDNPTLTRFFAFHFLLPFVIAGLTLVHLTFLHETGSNNPLGIPSDCDKIPFHPYYSIKDLLGFALMLIPLITLALFSPNLLGDPENFTPANPLATPPHIKPEWYFLFAYAILRSIPNKLGGVLALAASVLILFLIPLLHVSKQRSMTFRPLSQILFWTLVADLLILTWVGS</sequence>
<reference key="1">
    <citation type="journal article" date="1999" name="Ibis">
        <title>Molecular analysis of the phylogeny of 11 genera of the Corvidae.</title>
        <authorList>
            <person name="Cibois A."/>
            <person name="Pasquet E."/>
        </authorList>
    </citation>
    <scope>NUCLEOTIDE SEQUENCE [GENOMIC DNA]</scope>
</reference>
<reference key="2">
    <citation type="journal article" date="2000" name="Proc. R. Soc. B">
        <title>Cryptic genetic variation and paraphyly in ravens.</title>
        <authorList>
            <person name="Omland K.E."/>
            <person name="Tarr C.L."/>
            <person name="Boarman W.I."/>
            <person name="Marzluff J.M."/>
            <person name="Fleischer R.C."/>
        </authorList>
    </citation>
    <scope>NUCLEOTIDE SEQUENCE [GENOMIC DNA] OF 1-102</scope>
    <source>
        <strain>Isolate California-168</strain>
        <strain>Isolate California-169</strain>
        <strain>Isolate California-170</strain>
        <strain>Isolate California-171</strain>
        <strain>Isolate California-175</strain>
        <strain>Isolate California-176</strain>
        <strain>Isolate Idaho-1</strain>
        <strain>Isolate Idaho-10</strain>
        <strain>Isolate Idaho-11</strain>
        <strain>Isolate Idaho-12</strain>
        <strain>Isolate Idaho-2</strain>
        <strain>Isolate Idaho-7</strain>
        <strain>Isolate Idaho-8</strain>
        <strain>Isolate Maine-1</strain>
        <strain>Isolate Maine-2</strain>
        <strain>Isolate Maine-3</strain>
        <strain>Isolate New Mexico-522</strain>
        <strain>Isolate New Mexico-523</strain>
        <strain>Isolate Siberia-566</strain>
        <strain>Isolate Washington-567</strain>
        <strain>Isolate Washington-899</strain>
        <strain>Isolate Washington-HAN</strain>
        <strain>Isolate Washington-SOA</strain>
    </source>
</reference>